<name>RLMH_DESRM</name>
<comment type="function">
    <text evidence="1">Specifically methylates the pseudouridine at position 1915 (m3Psi1915) in 23S rRNA.</text>
</comment>
<comment type="catalytic activity">
    <reaction evidence="1">
        <text>pseudouridine(1915) in 23S rRNA + S-adenosyl-L-methionine = N(3)-methylpseudouridine(1915) in 23S rRNA + S-adenosyl-L-homocysteine + H(+)</text>
        <dbReference type="Rhea" id="RHEA:42752"/>
        <dbReference type="Rhea" id="RHEA-COMP:10221"/>
        <dbReference type="Rhea" id="RHEA-COMP:10222"/>
        <dbReference type="ChEBI" id="CHEBI:15378"/>
        <dbReference type="ChEBI" id="CHEBI:57856"/>
        <dbReference type="ChEBI" id="CHEBI:59789"/>
        <dbReference type="ChEBI" id="CHEBI:65314"/>
        <dbReference type="ChEBI" id="CHEBI:74486"/>
        <dbReference type="EC" id="2.1.1.177"/>
    </reaction>
</comment>
<comment type="subunit">
    <text evidence="1">Homodimer.</text>
</comment>
<comment type="subcellular location">
    <subcellularLocation>
        <location evidence="1">Cytoplasm</location>
    </subcellularLocation>
</comment>
<comment type="similarity">
    <text evidence="1">Belongs to the RNA methyltransferase RlmH family.</text>
</comment>
<keyword id="KW-0963">Cytoplasm</keyword>
<keyword id="KW-0489">Methyltransferase</keyword>
<keyword id="KW-1185">Reference proteome</keyword>
<keyword id="KW-0698">rRNA processing</keyword>
<keyword id="KW-0949">S-adenosyl-L-methionine</keyword>
<keyword id="KW-0808">Transferase</keyword>
<organism>
    <name type="scientific">Desulforamulus reducens (strain ATCC BAA-1160 / DSM 100696 / MI-1)</name>
    <name type="common">Desulfotomaculum reducens</name>
    <dbReference type="NCBI Taxonomy" id="349161"/>
    <lineage>
        <taxon>Bacteria</taxon>
        <taxon>Bacillati</taxon>
        <taxon>Bacillota</taxon>
        <taxon>Clostridia</taxon>
        <taxon>Eubacteriales</taxon>
        <taxon>Peptococcaceae</taxon>
        <taxon>Desulforamulus</taxon>
    </lineage>
</organism>
<proteinExistence type="inferred from homology"/>
<reference key="1">
    <citation type="submission" date="2007-03" db="EMBL/GenBank/DDBJ databases">
        <title>Complete sequence of Desulfotomaculum reducens MI-1.</title>
        <authorList>
            <consortium name="US DOE Joint Genome Institute"/>
            <person name="Copeland A."/>
            <person name="Lucas S."/>
            <person name="Lapidus A."/>
            <person name="Barry K."/>
            <person name="Detter J.C."/>
            <person name="Glavina del Rio T."/>
            <person name="Hammon N."/>
            <person name="Israni S."/>
            <person name="Dalin E."/>
            <person name="Tice H."/>
            <person name="Pitluck S."/>
            <person name="Sims D."/>
            <person name="Brettin T."/>
            <person name="Bruce D."/>
            <person name="Han C."/>
            <person name="Tapia R."/>
            <person name="Schmutz J."/>
            <person name="Larimer F."/>
            <person name="Land M."/>
            <person name="Hauser L."/>
            <person name="Kyrpides N."/>
            <person name="Kim E."/>
            <person name="Tebo B.M."/>
            <person name="Richardson P."/>
        </authorList>
    </citation>
    <scope>NUCLEOTIDE SEQUENCE [LARGE SCALE GENOMIC DNA]</scope>
    <source>
        <strain>ATCC BAA-1160 / DSM 100696 / MI-1</strain>
    </source>
</reference>
<sequence length="160" mass="18030">MIKISILCVGKLKEKYLAEGIKEYLKRLTPYAKVDISEVPDEPCPENAPMAIEEQVRQKEADKLAKKLRPGTFLVVLDLKGKMLSSEDMAGKIQDLALSGKSDLTFIIGGSIGLAPSLVERANLLLALSNLTFPHQLVRLLLMEQIYRWFKIIHNEPYHK</sequence>
<dbReference type="EC" id="2.1.1.177" evidence="1"/>
<dbReference type="EMBL" id="CP000612">
    <property type="protein sequence ID" value="ABO51793.1"/>
    <property type="molecule type" value="Genomic_DNA"/>
</dbReference>
<dbReference type="RefSeq" id="WP_011879578.1">
    <property type="nucleotide sequence ID" value="NC_009253.1"/>
</dbReference>
<dbReference type="SMR" id="A4J9P0"/>
<dbReference type="STRING" id="349161.Dred_3293"/>
<dbReference type="KEGG" id="drm:Dred_3293"/>
<dbReference type="eggNOG" id="COG1576">
    <property type="taxonomic scope" value="Bacteria"/>
</dbReference>
<dbReference type="HOGENOM" id="CLU_100552_0_0_9"/>
<dbReference type="Proteomes" id="UP000001556">
    <property type="component" value="Chromosome"/>
</dbReference>
<dbReference type="GO" id="GO:0005737">
    <property type="term" value="C:cytoplasm"/>
    <property type="evidence" value="ECO:0007669"/>
    <property type="project" value="UniProtKB-SubCell"/>
</dbReference>
<dbReference type="GO" id="GO:0070038">
    <property type="term" value="F:rRNA (pseudouridine-N3-)-methyltransferase activity"/>
    <property type="evidence" value="ECO:0007669"/>
    <property type="project" value="UniProtKB-UniRule"/>
</dbReference>
<dbReference type="CDD" id="cd18081">
    <property type="entry name" value="RlmH-like"/>
    <property type="match status" value="1"/>
</dbReference>
<dbReference type="Gene3D" id="3.40.1280.10">
    <property type="match status" value="1"/>
</dbReference>
<dbReference type="HAMAP" id="MF_00658">
    <property type="entry name" value="23SrRNA_methyltr_H"/>
    <property type="match status" value="1"/>
</dbReference>
<dbReference type="InterPro" id="IPR029028">
    <property type="entry name" value="Alpha/beta_knot_MTases"/>
</dbReference>
<dbReference type="InterPro" id="IPR003742">
    <property type="entry name" value="RlmH-like"/>
</dbReference>
<dbReference type="InterPro" id="IPR029026">
    <property type="entry name" value="tRNA_m1G_MTases_N"/>
</dbReference>
<dbReference type="NCBIfam" id="NF000985">
    <property type="entry name" value="PRK00103.1-3"/>
    <property type="match status" value="1"/>
</dbReference>
<dbReference type="NCBIfam" id="TIGR00246">
    <property type="entry name" value="tRNA_RlmH_YbeA"/>
    <property type="match status" value="1"/>
</dbReference>
<dbReference type="PANTHER" id="PTHR33603">
    <property type="entry name" value="METHYLTRANSFERASE"/>
    <property type="match status" value="1"/>
</dbReference>
<dbReference type="PANTHER" id="PTHR33603:SF1">
    <property type="entry name" value="RIBOSOMAL RNA LARGE SUBUNIT METHYLTRANSFERASE H"/>
    <property type="match status" value="1"/>
</dbReference>
<dbReference type="Pfam" id="PF02590">
    <property type="entry name" value="SPOUT_MTase"/>
    <property type="match status" value="1"/>
</dbReference>
<dbReference type="PIRSF" id="PIRSF004505">
    <property type="entry name" value="MT_bac"/>
    <property type="match status" value="1"/>
</dbReference>
<dbReference type="SUPFAM" id="SSF75217">
    <property type="entry name" value="alpha/beta knot"/>
    <property type="match status" value="1"/>
</dbReference>
<protein>
    <recommendedName>
        <fullName evidence="1">Ribosomal RNA large subunit methyltransferase H</fullName>
        <ecNumber evidence="1">2.1.1.177</ecNumber>
    </recommendedName>
    <alternativeName>
        <fullName evidence="1">23S rRNA (pseudouridine1915-N3)-methyltransferase</fullName>
    </alternativeName>
    <alternativeName>
        <fullName evidence="1">23S rRNA m3Psi1915 methyltransferase</fullName>
    </alternativeName>
    <alternativeName>
        <fullName evidence="1">rRNA (pseudouridine-N3-)-methyltransferase RlmH</fullName>
    </alternativeName>
</protein>
<feature type="chain" id="PRO_0000366588" description="Ribosomal RNA large subunit methyltransferase H">
    <location>
        <begin position="1"/>
        <end position="160"/>
    </location>
</feature>
<feature type="binding site" evidence="1">
    <location>
        <position position="77"/>
    </location>
    <ligand>
        <name>S-adenosyl-L-methionine</name>
        <dbReference type="ChEBI" id="CHEBI:59789"/>
    </ligand>
</feature>
<feature type="binding site" evidence="1">
    <location>
        <position position="109"/>
    </location>
    <ligand>
        <name>S-adenosyl-L-methionine</name>
        <dbReference type="ChEBI" id="CHEBI:59789"/>
    </ligand>
</feature>
<feature type="binding site" evidence="1">
    <location>
        <begin position="128"/>
        <end position="133"/>
    </location>
    <ligand>
        <name>S-adenosyl-L-methionine</name>
        <dbReference type="ChEBI" id="CHEBI:59789"/>
    </ligand>
</feature>
<gene>
    <name evidence="1" type="primary">rlmH</name>
    <name type="ordered locus">Dred_3293</name>
</gene>
<accession>A4J9P0</accession>
<evidence type="ECO:0000255" key="1">
    <source>
        <dbReference type="HAMAP-Rule" id="MF_00658"/>
    </source>
</evidence>